<keyword id="KW-0050">Antiport</keyword>
<keyword id="KW-0997">Cell inner membrane</keyword>
<keyword id="KW-1003">Cell membrane</keyword>
<keyword id="KW-0472">Membrane</keyword>
<keyword id="KW-1185">Reference proteome</keyword>
<keyword id="KW-0812">Transmembrane</keyword>
<keyword id="KW-1133">Transmembrane helix</keyword>
<keyword id="KW-0813">Transport</keyword>
<proteinExistence type="predicted"/>
<organism>
    <name type="scientific">Escherichia coli (strain K12)</name>
    <dbReference type="NCBI Taxonomy" id="83333"/>
    <lineage>
        <taxon>Bacteria</taxon>
        <taxon>Pseudomonadati</taxon>
        <taxon>Pseudomonadota</taxon>
        <taxon>Gammaproteobacteria</taxon>
        <taxon>Enterobacterales</taxon>
        <taxon>Enterobacteriaceae</taxon>
        <taxon>Escherichia</taxon>
    </lineage>
</organism>
<protein>
    <recommendedName>
        <fullName>Putative basic amino acid antiporter YfcC</fullName>
    </recommendedName>
</protein>
<name>YFCC_ECOLI</name>
<comment type="function">
    <text evidence="3">Metabolomic profiling of different yfcC over-expression and deletion strains suggests that it may affect the glyoxylate shunt.</text>
</comment>
<comment type="subcellular location">
    <subcellularLocation>
        <location evidence="2">Cell inner membrane</location>
        <topology evidence="2">Multi-pass membrane protein</topology>
    </subcellularLocation>
</comment>
<comment type="similarity">
    <text evidence="2">To H.influenzae HI_0594.</text>
</comment>
<comment type="similarity">
    <text evidence="2">To B.subtilis YcgA.</text>
</comment>
<accession>P39263</accession>
<accession>P76493</accession>
<accession>P77678</accession>
<dbReference type="EMBL" id="U00096">
    <property type="protein sequence ID" value="AAC75358.2"/>
    <property type="molecule type" value="Genomic_DNA"/>
</dbReference>
<dbReference type="EMBL" id="AP009048">
    <property type="protein sequence ID" value="BAA16137.1"/>
    <property type="molecule type" value="Genomic_DNA"/>
</dbReference>
<dbReference type="EMBL" id="D17576">
    <property type="status" value="NOT_ANNOTATED_CDS"/>
    <property type="molecule type" value="Genomic_DNA"/>
</dbReference>
<dbReference type="PIR" id="H65001">
    <property type="entry name" value="H65001"/>
</dbReference>
<dbReference type="RefSeq" id="NP_416801.2">
    <property type="nucleotide sequence ID" value="NC_000913.3"/>
</dbReference>
<dbReference type="RefSeq" id="WP_001274493.1">
    <property type="nucleotide sequence ID" value="NZ_STEB01000008.1"/>
</dbReference>
<dbReference type="SMR" id="P39263"/>
<dbReference type="BioGRID" id="4261493">
    <property type="interactions" value="212"/>
</dbReference>
<dbReference type="DIP" id="DIP-11977N"/>
<dbReference type="FunCoup" id="P39263">
    <property type="interactions" value="210"/>
</dbReference>
<dbReference type="IntAct" id="P39263">
    <property type="interactions" value="2"/>
</dbReference>
<dbReference type="STRING" id="511145.b2298"/>
<dbReference type="TCDB" id="2.A.118.1.8">
    <property type="family name" value="the basic amino acid antiporter (arcd) family"/>
</dbReference>
<dbReference type="PaxDb" id="511145-b2298"/>
<dbReference type="EnsemblBacteria" id="AAC75358">
    <property type="protein sequence ID" value="AAC75358"/>
    <property type="gene ID" value="b2298"/>
</dbReference>
<dbReference type="GeneID" id="75205656"/>
<dbReference type="GeneID" id="946780"/>
<dbReference type="KEGG" id="ecj:JW2295"/>
<dbReference type="KEGG" id="eco:b2298"/>
<dbReference type="KEGG" id="ecoc:C3026_12820"/>
<dbReference type="PATRIC" id="fig|511145.12.peg.2393"/>
<dbReference type="EchoBASE" id="EB2491"/>
<dbReference type="eggNOG" id="COG1288">
    <property type="taxonomic scope" value="Bacteria"/>
</dbReference>
<dbReference type="HOGENOM" id="CLU_035307_0_0_6"/>
<dbReference type="InParanoid" id="P39263"/>
<dbReference type="OMA" id="TATILHW"/>
<dbReference type="OrthoDB" id="255482at2"/>
<dbReference type="PhylomeDB" id="P39263"/>
<dbReference type="BioCyc" id="EcoCyc:G7190-MONOMER"/>
<dbReference type="PRO" id="PR:P39263"/>
<dbReference type="Proteomes" id="UP000000625">
    <property type="component" value="Chromosome"/>
</dbReference>
<dbReference type="GO" id="GO:0005886">
    <property type="term" value="C:plasma membrane"/>
    <property type="evidence" value="ECO:0000314"/>
    <property type="project" value="EcoCyc"/>
</dbReference>
<dbReference type="GO" id="GO:0015297">
    <property type="term" value="F:antiporter activity"/>
    <property type="evidence" value="ECO:0007669"/>
    <property type="project" value="UniProtKB-KW"/>
</dbReference>
<dbReference type="InterPro" id="IPR018385">
    <property type="entry name" value="C4_dicarb_anaerob_car-like"/>
</dbReference>
<dbReference type="InterPro" id="IPR051679">
    <property type="entry name" value="DASS-Related_Transporters"/>
</dbReference>
<dbReference type="NCBIfam" id="NF008611">
    <property type="entry name" value="PRK11588.1"/>
    <property type="match status" value="1"/>
</dbReference>
<dbReference type="PANTHER" id="PTHR43652">
    <property type="entry name" value="BASIC AMINO ACID ANTIPORTER YFCC-RELATED"/>
    <property type="match status" value="1"/>
</dbReference>
<dbReference type="PANTHER" id="PTHR43652:SF2">
    <property type="entry name" value="BASIC AMINO ACID ANTIPORTER YFCC-RELATED"/>
    <property type="match status" value="1"/>
</dbReference>
<dbReference type="Pfam" id="PF03606">
    <property type="entry name" value="DcuC"/>
    <property type="match status" value="1"/>
</dbReference>
<evidence type="ECO:0000255" key="1"/>
<evidence type="ECO:0000305" key="2"/>
<evidence type="ECO:0000305" key="3">
    <source>
    </source>
</evidence>
<gene>
    <name type="primary">yfcC</name>
    <name type="ordered locus">b2298</name>
    <name type="ordered locus">JW2295</name>
</gene>
<sequence length="506" mass="54797">MSAITESKPTRRWAMPDTLVIIFFVAILTSLATWVVPVGMFDSQEVQYQVDGQTKTRKVVDPHSFRILTNEAGEPEYHRVQLFTTGDERPGLMNFPFEGLTSGSKYGTAVGIIMFMLVIGGAFGIVMRTGTIDNGILALIRHTRGNEILFIPALFILFSLGGAVFGMGEEAVAFAIIIAPLMVRLGYDSITTVLVTYIATQIGFASSWMNPFCVVVAQGIAGVPVLSGSGLRIVVWVIATLIGLIFTMVYASRVKKNPLLSRVHESDRFFREKQADVEQRPFTFGDWLVLIVLTAVMVWVIWGVIVNAWFIPEIASQFFTMGLVIGIIGVVFRLNGMTVNTMASSFTEGARMMIAPALLVGFAKGILLLVGNGEAGDASVLNTILNSIANAISGLDNAVAAWFMLLFQAVFNFFVTSGSGQAALTMPLLAPLGDLVGVNRQVTVLAFQFGDGFSHIIYPTSASLMATLGVCRVDFRNWLKVGATLLGLLFIMSSVVVIGAQLMGYH</sequence>
<feature type="chain" id="PRO_0000169191" description="Putative basic amino acid antiporter YfcC">
    <location>
        <begin position="1"/>
        <end position="506"/>
    </location>
</feature>
<feature type="transmembrane region" description="Helical" evidence="1">
    <location>
        <begin position="19"/>
        <end position="39"/>
    </location>
</feature>
<feature type="transmembrane region" description="Helical" evidence="1">
    <location>
        <begin position="107"/>
        <end position="127"/>
    </location>
</feature>
<feature type="transmembrane region" description="Helical" evidence="1">
    <location>
        <begin position="148"/>
        <end position="168"/>
    </location>
</feature>
<feature type="transmembrane region" description="Helical" evidence="1">
    <location>
        <begin position="171"/>
        <end position="191"/>
    </location>
</feature>
<feature type="transmembrane region" description="Helical" evidence="1">
    <location>
        <begin position="208"/>
        <end position="228"/>
    </location>
</feature>
<feature type="transmembrane region" description="Helical" evidence="1">
    <location>
        <begin position="231"/>
        <end position="251"/>
    </location>
</feature>
<feature type="transmembrane region" description="Helical" evidence="1">
    <location>
        <begin position="287"/>
        <end position="307"/>
    </location>
</feature>
<feature type="transmembrane region" description="Helical" evidence="1">
    <location>
        <begin position="310"/>
        <end position="330"/>
    </location>
</feature>
<feature type="transmembrane region" description="Helical" evidence="1">
    <location>
        <begin position="352"/>
        <end position="372"/>
    </location>
</feature>
<feature type="transmembrane region" description="Helical" evidence="1">
    <location>
        <begin position="398"/>
        <end position="418"/>
    </location>
</feature>
<feature type="transmembrane region" description="Helical" evidence="1">
    <location>
        <begin position="419"/>
        <end position="439"/>
    </location>
</feature>
<feature type="transmembrane region" description="Helical" evidence="1">
    <location>
        <begin position="442"/>
        <end position="462"/>
    </location>
</feature>
<feature type="transmembrane region" description="Helical" evidence="1">
    <location>
        <begin position="485"/>
        <end position="505"/>
    </location>
</feature>
<feature type="sequence conflict" description="In Ref. 4; D17576." evidence="2" ref="4">
    <original>MSAITESKPTRRWAMPDTLVIIFFVAILTSLATW</original>
    <variation>MLFNQPCHL</variation>
    <location>
        <begin position="1"/>
        <end position="34"/>
    </location>
</feature>
<feature type="sequence conflict" description="In Ref. 4; D17576." evidence="2" ref="4">
    <original>GDERP</original>
    <variation>AMNAR</variation>
    <location>
        <begin position="86"/>
        <end position="90"/>
    </location>
</feature>
<reference key="1">
    <citation type="journal article" date="1997" name="DNA Res.">
        <title>Construction of a contiguous 874-kb sequence of the Escherichia coli-K12 genome corresponding to 50.0-68.8 min on the linkage map and analysis of its sequence features.</title>
        <authorList>
            <person name="Yamamoto Y."/>
            <person name="Aiba H."/>
            <person name="Baba T."/>
            <person name="Hayashi K."/>
            <person name="Inada T."/>
            <person name="Isono K."/>
            <person name="Itoh T."/>
            <person name="Kimura S."/>
            <person name="Kitagawa M."/>
            <person name="Makino K."/>
            <person name="Miki T."/>
            <person name="Mitsuhashi N."/>
            <person name="Mizobuchi K."/>
            <person name="Mori H."/>
            <person name="Nakade S."/>
            <person name="Nakamura Y."/>
            <person name="Nashimoto H."/>
            <person name="Oshima T."/>
            <person name="Oyama S."/>
            <person name="Saito N."/>
            <person name="Sampei G."/>
            <person name="Satoh Y."/>
            <person name="Sivasundaram S."/>
            <person name="Tagami H."/>
            <person name="Takahashi H."/>
            <person name="Takeda J."/>
            <person name="Takemoto K."/>
            <person name="Uehara K."/>
            <person name="Wada C."/>
            <person name="Yamagata S."/>
            <person name="Horiuchi T."/>
        </authorList>
    </citation>
    <scope>NUCLEOTIDE SEQUENCE [LARGE SCALE GENOMIC DNA]</scope>
    <source>
        <strain>K12 / W3110 / ATCC 27325 / DSM 5911</strain>
    </source>
</reference>
<reference key="2">
    <citation type="journal article" date="1997" name="Science">
        <title>The complete genome sequence of Escherichia coli K-12.</title>
        <authorList>
            <person name="Blattner F.R."/>
            <person name="Plunkett G. III"/>
            <person name="Bloch C.A."/>
            <person name="Perna N.T."/>
            <person name="Burland V."/>
            <person name="Riley M."/>
            <person name="Collado-Vides J."/>
            <person name="Glasner J.D."/>
            <person name="Rode C.K."/>
            <person name="Mayhew G.F."/>
            <person name="Gregor J."/>
            <person name="Davis N.W."/>
            <person name="Kirkpatrick H.A."/>
            <person name="Goeden M.A."/>
            <person name="Rose D.J."/>
            <person name="Mau B."/>
            <person name="Shao Y."/>
        </authorList>
    </citation>
    <scope>NUCLEOTIDE SEQUENCE [LARGE SCALE GENOMIC DNA]</scope>
    <source>
        <strain>K12 / MG1655 / ATCC 47076</strain>
    </source>
</reference>
<reference key="3">
    <citation type="journal article" date="2006" name="Mol. Syst. Biol.">
        <title>Highly accurate genome sequences of Escherichia coli K-12 strains MG1655 and W3110.</title>
        <authorList>
            <person name="Hayashi K."/>
            <person name="Morooka N."/>
            <person name="Yamamoto Y."/>
            <person name="Fujita K."/>
            <person name="Isono K."/>
            <person name="Choi S."/>
            <person name="Ohtsubo E."/>
            <person name="Baba T."/>
            <person name="Wanner B.L."/>
            <person name="Mori H."/>
            <person name="Horiuchi T."/>
        </authorList>
    </citation>
    <scope>NUCLEOTIDE SEQUENCE [LARGE SCALE GENOMIC DNA]</scope>
    <source>
        <strain>K12 / W3110 / ATCC 27325 / DSM 5911</strain>
    </source>
</reference>
<reference key="4">
    <citation type="journal article" date="1994" name="J. Biochem.">
        <title>Identification and characterization of the ackA (acetate kinase A)-pta (phosphotransacetylase) operon and complementation analysis of acetate utilization by an ackA-pta deletion mutant of Escherichia coli.</title>
        <authorList>
            <person name="Kakuda H."/>
            <person name="Hosono K."/>
            <person name="Shiroishi K."/>
            <person name="Ichihara S."/>
        </authorList>
    </citation>
    <scope>NUCLEOTIDE SEQUENCE [GENOMIC DNA] OF 1-90</scope>
    <source>
        <strain>K12 / KH131</strain>
    </source>
</reference>
<reference key="5">
    <citation type="unpublished observations" date="1994-11">
        <authorList>
            <person name="Rudd K.E."/>
        </authorList>
    </citation>
    <scope>IDENTIFICATION</scope>
</reference>
<reference key="6">
    <citation type="journal article" date="2014" name="Anal. Biochem.">
        <title>A metabolomics-based method for studying the effect of yfcC gene in Escherichia coli on metabolism.</title>
        <authorList>
            <person name="Wang X."/>
            <person name="Xie Y."/>
            <person name="Gao P."/>
            <person name="Zhang S."/>
            <person name="Tan H."/>
            <person name="Yang F."/>
            <person name="Lian R."/>
            <person name="Tian J."/>
            <person name="Xu G."/>
        </authorList>
    </citation>
    <scope>FUNCTION</scope>
    <source>
        <strain>K12 / MC4100 / ATCC 35695 / DSM 6574</strain>
    </source>
</reference>